<protein>
    <recommendedName>
        <fullName>LOB domain-containing protein 6</fullName>
    </recommendedName>
    <alternativeName>
        <fullName>Protein ASYMMETRIC LEAVES 2</fullName>
    </alternativeName>
    <alternativeName>
        <fullName>Protein indeterminate gametophyte 1</fullName>
    </alternativeName>
    <alternativeName>
        <fullName>ZmIG1</fullName>
    </alternativeName>
</protein>
<reference key="1">
    <citation type="journal article" date="2005" name="Plant Cell">
        <title>Maize rough sheath2 and its Arabidopsis orthologue ASYMMETRIC LEAVES1 interact with HIRA, a predicted histone chaperone, to maintain knox gene silencing and determinacy during organogenesis.</title>
        <authorList>
            <person name="Phelps-Durr T.L."/>
            <person name="Thomas J."/>
            <person name="Vahab P."/>
            <person name="Timmermans M.C.P."/>
        </authorList>
    </citation>
    <scope>NUCLEOTIDE SEQUENCE [MRNA]</scope>
    <scope>INTERACTION WITH RS2</scope>
    <source>
        <tissue>Apices</tissue>
    </source>
</reference>
<reference key="2">
    <citation type="journal article" date="2007" name="Plant Cell">
        <title>The indeterminate gametophyte1 gene of maize encodes a LOB domain protein required for embryo Sac and leaf development.</title>
        <authorList>
            <person name="Evans M.M.S."/>
        </authorList>
    </citation>
    <scope>NUCLEOTIDE SEQUENCE [GENOMIC DNA]</scope>
    <scope>TISSUE SPECIFICITY</scope>
    <scope>DEVELOPMENTAL STAGE</scope>
    <scope>FUNCTION</scope>
    <source>
        <strain>cv. B73</strain>
    </source>
</reference>
<organism>
    <name type="scientific">Zea mays</name>
    <name type="common">Maize</name>
    <dbReference type="NCBI Taxonomy" id="4577"/>
    <lineage>
        <taxon>Eukaryota</taxon>
        <taxon>Viridiplantae</taxon>
        <taxon>Streptophyta</taxon>
        <taxon>Embryophyta</taxon>
        <taxon>Tracheophyta</taxon>
        <taxon>Spermatophyta</taxon>
        <taxon>Magnoliopsida</taxon>
        <taxon>Liliopsida</taxon>
        <taxon>Poales</taxon>
        <taxon>Poaceae</taxon>
        <taxon>PACMAD clade</taxon>
        <taxon>Panicoideae</taxon>
        <taxon>Andropogonodae</taxon>
        <taxon>Andropogoneae</taxon>
        <taxon>Tripsacinae</taxon>
        <taxon>Zea</taxon>
    </lineage>
</organism>
<evidence type="ECO:0000250" key="1"/>
<evidence type="ECO:0000255" key="2">
    <source>
        <dbReference type="PROSITE-ProRule" id="PRU00291"/>
    </source>
</evidence>
<evidence type="ECO:0000269" key="3">
    <source>
    </source>
</evidence>
<evidence type="ECO:0000269" key="4">
    <source>
    </source>
</evidence>
<evidence type="ECO:0000305" key="5"/>
<keyword id="KW-0217">Developmental protein</keyword>
<keyword id="KW-0539">Nucleus</keyword>
<keyword id="KW-1185">Reference proteome</keyword>
<dbReference type="EMBL" id="AY940681">
    <property type="protein sequence ID" value="AAY24684.1"/>
    <property type="molecule type" value="mRNA"/>
</dbReference>
<dbReference type="EMBL" id="EF081454">
    <property type="protein sequence ID" value="ABM21683.1"/>
    <property type="molecule type" value="Genomic_DNA"/>
</dbReference>
<dbReference type="RefSeq" id="NP_001105838.1">
    <property type="nucleotide sequence ID" value="NM_001112368.1"/>
</dbReference>
<dbReference type="RefSeq" id="XP_008673456.1">
    <property type="nucleotide sequence ID" value="XM_008675234.1"/>
</dbReference>
<dbReference type="SMR" id="Q32SG3"/>
<dbReference type="FunCoup" id="Q32SG3">
    <property type="interactions" value="2"/>
</dbReference>
<dbReference type="IntAct" id="Q32SG3">
    <property type="interactions" value="1"/>
</dbReference>
<dbReference type="STRING" id="4577.Q32SG3"/>
<dbReference type="PaxDb" id="4577-GRMZM2G118250_P06"/>
<dbReference type="EnsemblPlants" id="Zm00001eb145150_T001">
    <property type="protein sequence ID" value="Zm00001eb145150_P001"/>
    <property type="gene ID" value="Zm00001eb145150"/>
</dbReference>
<dbReference type="EnsemblPlants" id="Zm00001eb145150_T003">
    <property type="protein sequence ID" value="Zm00001eb145150_P003"/>
    <property type="gene ID" value="Zm00001eb145150"/>
</dbReference>
<dbReference type="EnsemblPlants" id="Zm00001eb145150_T005">
    <property type="protein sequence ID" value="Zm00001eb145150_P005"/>
    <property type="gene ID" value="Zm00001eb145150"/>
</dbReference>
<dbReference type="GeneID" id="732739"/>
<dbReference type="Gramene" id="Zm00001eb145150_T001">
    <property type="protein sequence ID" value="Zm00001eb145150_P001"/>
    <property type="gene ID" value="Zm00001eb145150"/>
</dbReference>
<dbReference type="Gramene" id="Zm00001eb145150_T003">
    <property type="protein sequence ID" value="Zm00001eb145150_P003"/>
    <property type="gene ID" value="Zm00001eb145150"/>
</dbReference>
<dbReference type="Gramene" id="Zm00001eb145150_T005">
    <property type="protein sequence ID" value="Zm00001eb145150_P005"/>
    <property type="gene ID" value="Zm00001eb145150"/>
</dbReference>
<dbReference type="KEGG" id="zma:732739"/>
<dbReference type="eggNOG" id="ENOG502QV43">
    <property type="taxonomic scope" value="Eukaryota"/>
</dbReference>
<dbReference type="HOGENOM" id="CLU_058353_1_2_1"/>
<dbReference type="InParanoid" id="Q32SG3"/>
<dbReference type="OMA" id="DEWAYVS"/>
<dbReference type="OrthoDB" id="2016447at2759"/>
<dbReference type="Proteomes" id="UP000007305">
    <property type="component" value="Chromosome 3"/>
</dbReference>
<dbReference type="ExpressionAtlas" id="Q32SG3">
    <property type="expression patterns" value="baseline and differential"/>
</dbReference>
<dbReference type="GO" id="GO:0005634">
    <property type="term" value="C:nucleus"/>
    <property type="evidence" value="ECO:0007669"/>
    <property type="project" value="UniProtKB-SubCell"/>
</dbReference>
<dbReference type="InterPro" id="IPR004883">
    <property type="entry name" value="LOB"/>
</dbReference>
<dbReference type="PANTHER" id="PTHR31301">
    <property type="entry name" value="LOB DOMAIN-CONTAINING PROTEIN 4-RELATED"/>
    <property type="match status" value="1"/>
</dbReference>
<dbReference type="PANTHER" id="PTHR31301:SF83">
    <property type="entry name" value="PROTEIN ASYMMETRIC LEAVES 2"/>
    <property type="match status" value="1"/>
</dbReference>
<dbReference type="Pfam" id="PF03195">
    <property type="entry name" value="LOB"/>
    <property type="match status" value="1"/>
</dbReference>
<dbReference type="PROSITE" id="PS50891">
    <property type="entry name" value="LOB"/>
    <property type="match status" value="1"/>
</dbReference>
<accession>Q32SG3</accession>
<feature type="chain" id="PRO_0000299138" description="LOB domain-containing protein 6">
    <location>
        <begin position="1"/>
        <end position="260"/>
    </location>
</feature>
<feature type="domain" description="LOB" evidence="2">
    <location>
        <begin position="32"/>
        <end position="133"/>
    </location>
</feature>
<proteinExistence type="evidence at protein level"/>
<gene>
    <name type="primary">LBD6</name>
    <name type="synonym">AS2</name>
    <name type="synonym">IG1</name>
</gene>
<name>LBD6_MAIZE</name>
<sequence>MASSVPAPSGSVITVASSSSSAAAAAVCGTGSPCAACKFLRRKCQPDCVFAPYFPPDNPQKFVHVHRVFGASNVTKLLNELHPFQREDAVNSLAYEADMRLRDPVYGCVGVISILQHNLRQLQQDLARAKYELSKYQAAAAASASTAPTGPQAMAEFIGNAMPNGAHNFINIGHSAALGSLGGSASVFGQEQFGNAQMLSRSYDGGEPIARLGINGGGYEFGYSTAMGGSGAVSGLGTLGISPFLKSGTAGGDEKPNGGQ</sequence>
<comment type="function">
    <text evidence="4">Promotes the switch from proliferation to differentiation in the embryo sac. Negative regulator of cell proliferation in the adaxial side of leaves. Regulates the formation of a symmetric lamina and the establishment of venation. Interacts directly with RS2 (rough sheath 2) to repress some knox homeobox genes.</text>
</comment>
<comment type="subunit">
    <text evidence="3">Interacts with RS2.</text>
</comment>
<comment type="interaction">
    <interactant intactId="EBI-761239">
        <id>Q32SG3</id>
    </interactant>
    <interactant intactId="EBI-761350">
        <id>Q9S7B2</id>
        <label>RS2</label>
    </interactant>
    <organismsDiffer>false</organismsDiffer>
    <experiments>2</experiments>
</comment>
<comment type="subcellular location">
    <subcellularLocation>
        <location evidence="1">Nucleus</location>
    </subcellularLocation>
</comment>
<comment type="tissue specificity">
    <text evidence="4">Expressed in leaves, leaf primordia, immature ears, immature tassels, whole ovules, silk and husk leaves. Found on the adaxial side of organs.</text>
</comment>
<comment type="developmental stage">
    <text evidence="4">In embryo sac, detected as early as the one-nucleus stage. In older embryo sacs, highest expression in antipodal cells.</text>
</comment>
<comment type="miscellaneous">
    <text>Might be partially redundant with the IAL genes.</text>
</comment>
<comment type="similarity">
    <text evidence="5">Belongs to the LOB domain-containing protein family.</text>
</comment>